<gene>
    <name evidence="1" type="primary">ligA</name>
    <name type="ordered locus">CBUD_1522</name>
</gene>
<evidence type="ECO:0000255" key="1">
    <source>
        <dbReference type="HAMAP-Rule" id="MF_01588"/>
    </source>
</evidence>
<evidence type="ECO:0000305" key="2"/>
<reference key="1">
    <citation type="journal article" date="2009" name="Infect. Immun.">
        <title>Comparative genomics reveal extensive transposon-mediated genomic plasticity and diversity among potential effector proteins within the genus Coxiella.</title>
        <authorList>
            <person name="Beare P.A."/>
            <person name="Unsworth N."/>
            <person name="Andoh M."/>
            <person name="Voth D.E."/>
            <person name="Omsland A."/>
            <person name="Gilk S.D."/>
            <person name="Williams K.P."/>
            <person name="Sobral B.W."/>
            <person name="Kupko J.J. III"/>
            <person name="Porcella S.F."/>
            <person name="Samuel J.E."/>
            <person name="Heinzen R.A."/>
        </authorList>
    </citation>
    <scope>NUCLEOTIDE SEQUENCE [LARGE SCALE GENOMIC DNA]</scope>
    <source>
        <strain>Dugway 5J108-111</strain>
    </source>
</reference>
<proteinExistence type="inferred from homology"/>
<dbReference type="EC" id="6.5.1.2" evidence="1"/>
<dbReference type="EMBL" id="CP000733">
    <property type="protein sequence ID" value="ABS76887.2"/>
    <property type="status" value="ALT_INIT"/>
    <property type="molecule type" value="Genomic_DNA"/>
</dbReference>
<dbReference type="RefSeq" id="WP_011997131.1">
    <property type="nucleotide sequence ID" value="NC_009727.1"/>
</dbReference>
<dbReference type="SMR" id="A9KCS0"/>
<dbReference type="KEGG" id="cbd:CBUD_1522"/>
<dbReference type="HOGENOM" id="CLU_007764_2_1_6"/>
<dbReference type="Proteomes" id="UP000008555">
    <property type="component" value="Chromosome"/>
</dbReference>
<dbReference type="GO" id="GO:0005829">
    <property type="term" value="C:cytosol"/>
    <property type="evidence" value="ECO:0007669"/>
    <property type="project" value="TreeGrafter"/>
</dbReference>
<dbReference type="GO" id="GO:0003677">
    <property type="term" value="F:DNA binding"/>
    <property type="evidence" value="ECO:0007669"/>
    <property type="project" value="InterPro"/>
</dbReference>
<dbReference type="GO" id="GO:0003911">
    <property type="term" value="F:DNA ligase (NAD+) activity"/>
    <property type="evidence" value="ECO:0007669"/>
    <property type="project" value="UniProtKB-UniRule"/>
</dbReference>
<dbReference type="GO" id="GO:0046872">
    <property type="term" value="F:metal ion binding"/>
    <property type="evidence" value="ECO:0007669"/>
    <property type="project" value="UniProtKB-KW"/>
</dbReference>
<dbReference type="GO" id="GO:0006281">
    <property type="term" value="P:DNA repair"/>
    <property type="evidence" value="ECO:0007669"/>
    <property type="project" value="UniProtKB-KW"/>
</dbReference>
<dbReference type="GO" id="GO:0006260">
    <property type="term" value="P:DNA replication"/>
    <property type="evidence" value="ECO:0007669"/>
    <property type="project" value="UniProtKB-KW"/>
</dbReference>
<dbReference type="CDD" id="cd17748">
    <property type="entry name" value="BRCT_DNA_ligase_like"/>
    <property type="match status" value="1"/>
</dbReference>
<dbReference type="CDD" id="cd00114">
    <property type="entry name" value="LIGANc"/>
    <property type="match status" value="1"/>
</dbReference>
<dbReference type="FunFam" id="1.10.150.20:FF:000006">
    <property type="entry name" value="DNA ligase"/>
    <property type="match status" value="1"/>
</dbReference>
<dbReference type="FunFam" id="1.10.150.20:FF:000007">
    <property type="entry name" value="DNA ligase"/>
    <property type="match status" value="1"/>
</dbReference>
<dbReference type="FunFam" id="1.10.287.610:FF:000002">
    <property type="entry name" value="DNA ligase"/>
    <property type="match status" value="1"/>
</dbReference>
<dbReference type="FunFam" id="2.40.50.140:FF:000012">
    <property type="entry name" value="DNA ligase"/>
    <property type="match status" value="1"/>
</dbReference>
<dbReference type="FunFam" id="3.30.470.30:FF:000001">
    <property type="entry name" value="DNA ligase"/>
    <property type="match status" value="1"/>
</dbReference>
<dbReference type="FunFam" id="3.40.50.10190:FF:000086">
    <property type="entry name" value="DNA ligase"/>
    <property type="match status" value="1"/>
</dbReference>
<dbReference type="Gene3D" id="6.20.10.30">
    <property type="match status" value="1"/>
</dbReference>
<dbReference type="Gene3D" id="1.10.150.20">
    <property type="entry name" value="5' to 3' exonuclease, C-terminal subdomain"/>
    <property type="match status" value="2"/>
</dbReference>
<dbReference type="Gene3D" id="3.40.50.10190">
    <property type="entry name" value="BRCT domain"/>
    <property type="match status" value="1"/>
</dbReference>
<dbReference type="Gene3D" id="3.30.470.30">
    <property type="entry name" value="DNA ligase/mRNA capping enzyme"/>
    <property type="match status" value="1"/>
</dbReference>
<dbReference type="Gene3D" id="1.10.287.610">
    <property type="entry name" value="Helix hairpin bin"/>
    <property type="match status" value="1"/>
</dbReference>
<dbReference type="Gene3D" id="2.40.50.140">
    <property type="entry name" value="Nucleic acid-binding proteins"/>
    <property type="match status" value="1"/>
</dbReference>
<dbReference type="HAMAP" id="MF_01588">
    <property type="entry name" value="DNA_ligase_A"/>
    <property type="match status" value="1"/>
</dbReference>
<dbReference type="InterPro" id="IPR001357">
    <property type="entry name" value="BRCT_dom"/>
</dbReference>
<dbReference type="InterPro" id="IPR036420">
    <property type="entry name" value="BRCT_dom_sf"/>
</dbReference>
<dbReference type="InterPro" id="IPR041663">
    <property type="entry name" value="DisA/LigA_HHH"/>
</dbReference>
<dbReference type="InterPro" id="IPR001679">
    <property type="entry name" value="DNA_ligase"/>
</dbReference>
<dbReference type="InterPro" id="IPR018239">
    <property type="entry name" value="DNA_ligase_AS"/>
</dbReference>
<dbReference type="InterPro" id="IPR033136">
    <property type="entry name" value="DNA_ligase_CS"/>
</dbReference>
<dbReference type="InterPro" id="IPR013839">
    <property type="entry name" value="DNAligase_adenylation"/>
</dbReference>
<dbReference type="InterPro" id="IPR013840">
    <property type="entry name" value="DNAligase_N"/>
</dbReference>
<dbReference type="InterPro" id="IPR003583">
    <property type="entry name" value="Hlx-hairpin-Hlx_DNA-bd_motif"/>
</dbReference>
<dbReference type="InterPro" id="IPR012340">
    <property type="entry name" value="NA-bd_OB-fold"/>
</dbReference>
<dbReference type="InterPro" id="IPR004150">
    <property type="entry name" value="NAD_DNA_ligase_OB"/>
</dbReference>
<dbReference type="InterPro" id="IPR010994">
    <property type="entry name" value="RuvA_2-like"/>
</dbReference>
<dbReference type="InterPro" id="IPR004149">
    <property type="entry name" value="Znf_DNAligase_C4"/>
</dbReference>
<dbReference type="NCBIfam" id="TIGR00575">
    <property type="entry name" value="dnlj"/>
    <property type="match status" value="1"/>
</dbReference>
<dbReference type="NCBIfam" id="NF005932">
    <property type="entry name" value="PRK07956.1"/>
    <property type="match status" value="1"/>
</dbReference>
<dbReference type="PANTHER" id="PTHR23389">
    <property type="entry name" value="CHROMOSOME TRANSMISSION FIDELITY FACTOR 18"/>
    <property type="match status" value="1"/>
</dbReference>
<dbReference type="PANTHER" id="PTHR23389:SF9">
    <property type="entry name" value="DNA LIGASE"/>
    <property type="match status" value="1"/>
</dbReference>
<dbReference type="Pfam" id="PF00533">
    <property type="entry name" value="BRCT"/>
    <property type="match status" value="1"/>
</dbReference>
<dbReference type="Pfam" id="PF01653">
    <property type="entry name" value="DNA_ligase_aden"/>
    <property type="match status" value="1"/>
</dbReference>
<dbReference type="Pfam" id="PF03120">
    <property type="entry name" value="DNA_ligase_OB"/>
    <property type="match status" value="1"/>
</dbReference>
<dbReference type="Pfam" id="PF03119">
    <property type="entry name" value="DNA_ligase_ZBD"/>
    <property type="match status" value="1"/>
</dbReference>
<dbReference type="Pfam" id="PF12826">
    <property type="entry name" value="HHH_2"/>
    <property type="match status" value="1"/>
</dbReference>
<dbReference type="Pfam" id="PF14520">
    <property type="entry name" value="HHH_5"/>
    <property type="match status" value="1"/>
</dbReference>
<dbReference type="Pfam" id="PF22745">
    <property type="entry name" value="Nlig-Ia"/>
    <property type="match status" value="1"/>
</dbReference>
<dbReference type="PIRSF" id="PIRSF001604">
    <property type="entry name" value="LigA"/>
    <property type="match status" value="1"/>
</dbReference>
<dbReference type="SMART" id="SM00292">
    <property type="entry name" value="BRCT"/>
    <property type="match status" value="1"/>
</dbReference>
<dbReference type="SMART" id="SM00278">
    <property type="entry name" value="HhH1"/>
    <property type="match status" value="4"/>
</dbReference>
<dbReference type="SMART" id="SM00532">
    <property type="entry name" value="LIGANc"/>
    <property type="match status" value="1"/>
</dbReference>
<dbReference type="SUPFAM" id="SSF52113">
    <property type="entry name" value="BRCT domain"/>
    <property type="match status" value="1"/>
</dbReference>
<dbReference type="SUPFAM" id="SSF56091">
    <property type="entry name" value="DNA ligase/mRNA capping enzyme, catalytic domain"/>
    <property type="match status" value="1"/>
</dbReference>
<dbReference type="SUPFAM" id="SSF50249">
    <property type="entry name" value="Nucleic acid-binding proteins"/>
    <property type="match status" value="1"/>
</dbReference>
<dbReference type="SUPFAM" id="SSF47781">
    <property type="entry name" value="RuvA domain 2-like"/>
    <property type="match status" value="1"/>
</dbReference>
<dbReference type="PROSITE" id="PS50172">
    <property type="entry name" value="BRCT"/>
    <property type="match status" value="1"/>
</dbReference>
<dbReference type="PROSITE" id="PS01055">
    <property type="entry name" value="DNA_LIGASE_N1"/>
    <property type="match status" value="1"/>
</dbReference>
<dbReference type="PROSITE" id="PS01056">
    <property type="entry name" value="DNA_LIGASE_N2"/>
    <property type="match status" value="1"/>
</dbReference>
<name>DNLJ_COXBN</name>
<keyword id="KW-0227">DNA damage</keyword>
<keyword id="KW-0234">DNA repair</keyword>
<keyword id="KW-0235">DNA replication</keyword>
<keyword id="KW-0436">Ligase</keyword>
<keyword id="KW-0460">Magnesium</keyword>
<keyword id="KW-0464">Manganese</keyword>
<keyword id="KW-0479">Metal-binding</keyword>
<keyword id="KW-0520">NAD</keyword>
<keyword id="KW-0862">Zinc</keyword>
<protein>
    <recommendedName>
        <fullName evidence="1">DNA ligase</fullName>
        <ecNumber evidence="1">6.5.1.2</ecNumber>
    </recommendedName>
    <alternativeName>
        <fullName evidence="1">Polydeoxyribonucleotide synthase [NAD(+)]</fullName>
    </alternativeName>
</protein>
<comment type="function">
    <text evidence="1">DNA ligase that catalyzes the formation of phosphodiester linkages between 5'-phosphoryl and 3'-hydroxyl groups in double-stranded DNA using NAD as a coenzyme and as the energy source for the reaction. It is essential for DNA replication and repair of damaged DNA.</text>
</comment>
<comment type="catalytic activity">
    <reaction evidence="1">
        <text>NAD(+) + (deoxyribonucleotide)n-3'-hydroxyl + 5'-phospho-(deoxyribonucleotide)m = (deoxyribonucleotide)n+m + AMP + beta-nicotinamide D-nucleotide.</text>
        <dbReference type="EC" id="6.5.1.2"/>
    </reaction>
</comment>
<comment type="cofactor">
    <cofactor evidence="1">
        <name>Mg(2+)</name>
        <dbReference type="ChEBI" id="CHEBI:18420"/>
    </cofactor>
    <cofactor evidence="1">
        <name>Mn(2+)</name>
        <dbReference type="ChEBI" id="CHEBI:29035"/>
    </cofactor>
</comment>
<comment type="similarity">
    <text evidence="1">Belongs to the NAD-dependent DNA ligase family. LigA subfamily.</text>
</comment>
<comment type="sequence caution" evidence="2">
    <conflict type="erroneous initiation">
        <sequence resource="EMBL-CDS" id="ABS76887"/>
    </conflict>
</comment>
<accession>A9KCS0</accession>
<organism>
    <name type="scientific">Coxiella burnetii (strain Dugway 5J108-111)</name>
    <dbReference type="NCBI Taxonomy" id="434922"/>
    <lineage>
        <taxon>Bacteria</taxon>
        <taxon>Pseudomonadati</taxon>
        <taxon>Pseudomonadota</taxon>
        <taxon>Gammaproteobacteria</taxon>
        <taxon>Legionellales</taxon>
        <taxon>Coxiellaceae</taxon>
        <taxon>Coxiella</taxon>
    </lineage>
</organism>
<sequence length="670" mass="75366">MEVPAKIQKRIERLRQEINDHNYRYYVLSQPTIPDSVYDELFHELQKLEKKYPETITPSSPTQRVGAEPLKVFEPVHHEIPMLSLDNVFDEKGLRAFDKRIRQRLKLDKPFEYVCEPKMDGVALSLLYENGELIRAATRGDGYTGENVTQNTRTIASVPLQLRGNDYPELVEIRGEVLMPREGFAKFNREAEKRGDKTFANPRNAASGSLRQLDPRITAKRPLIFYGYLIGLLKGKDFPKNHCDVLKWFKDWGIPVISEIKVVGGIEGCLDYYEHLVKTREKMPFDIDGIVIKVNSLQVQAELGFVSRAPRWAIAYKFPAQEKMTVVKAIEFQVGRTGVVTPVARLEPVSVSGVTVSNATLHNFDELYRKDVRVGDTVIVRRAGDVIPEVVGPILAKRPKKAKLIKIPSRCPVCHAEVIKPEGEAVARCVGGLYCRAQLRESIKHFASRRALDIEGLGDKLVELFIQEKLIKDITGIYQLKKSAITALPRMGEKSAENLLTAIEKSKKTTLPRFLYALGIRGVGDTIARTLARHFHELDLLMKASIETLQEIRDIGPVVAENIHAFFHQKHNAELINKLIHLGVHWPQEKAVVKSEIAGKTFVLTGALKSLTREEAEEKIERSGGKATSSVSKNTDYVIVGENPGSKYEKAKALGISLIDEEAFLKLLKS</sequence>
<feature type="chain" id="PRO_0000340342" description="DNA ligase">
    <location>
        <begin position="1"/>
        <end position="670"/>
    </location>
</feature>
<feature type="domain" description="BRCT" evidence="1">
    <location>
        <begin position="592"/>
        <end position="670"/>
    </location>
</feature>
<feature type="active site" description="N6-AMP-lysine intermediate" evidence="1">
    <location>
        <position position="118"/>
    </location>
</feature>
<feature type="binding site" evidence="1">
    <location>
        <begin position="35"/>
        <end position="39"/>
    </location>
    <ligand>
        <name>NAD(+)</name>
        <dbReference type="ChEBI" id="CHEBI:57540"/>
    </ligand>
</feature>
<feature type="binding site" evidence="1">
    <location>
        <begin position="84"/>
        <end position="85"/>
    </location>
    <ligand>
        <name>NAD(+)</name>
        <dbReference type="ChEBI" id="CHEBI:57540"/>
    </ligand>
</feature>
<feature type="binding site" evidence="1">
    <location>
        <position position="116"/>
    </location>
    <ligand>
        <name>NAD(+)</name>
        <dbReference type="ChEBI" id="CHEBI:57540"/>
    </ligand>
</feature>
<feature type="binding site" evidence="1">
    <location>
        <position position="139"/>
    </location>
    <ligand>
        <name>NAD(+)</name>
        <dbReference type="ChEBI" id="CHEBI:57540"/>
    </ligand>
</feature>
<feature type="binding site" evidence="1">
    <location>
        <position position="176"/>
    </location>
    <ligand>
        <name>NAD(+)</name>
        <dbReference type="ChEBI" id="CHEBI:57540"/>
    </ligand>
</feature>
<feature type="binding site" evidence="1">
    <location>
        <position position="293"/>
    </location>
    <ligand>
        <name>NAD(+)</name>
        <dbReference type="ChEBI" id="CHEBI:57540"/>
    </ligand>
</feature>
<feature type="binding site" evidence="1">
    <location>
        <position position="317"/>
    </location>
    <ligand>
        <name>NAD(+)</name>
        <dbReference type="ChEBI" id="CHEBI:57540"/>
    </ligand>
</feature>
<feature type="binding site" evidence="1">
    <location>
        <position position="411"/>
    </location>
    <ligand>
        <name>Zn(2+)</name>
        <dbReference type="ChEBI" id="CHEBI:29105"/>
    </ligand>
</feature>
<feature type="binding site" evidence="1">
    <location>
        <position position="414"/>
    </location>
    <ligand>
        <name>Zn(2+)</name>
        <dbReference type="ChEBI" id="CHEBI:29105"/>
    </ligand>
</feature>
<feature type="binding site" evidence="1">
    <location>
        <position position="429"/>
    </location>
    <ligand>
        <name>Zn(2+)</name>
        <dbReference type="ChEBI" id="CHEBI:29105"/>
    </ligand>
</feature>
<feature type="binding site" evidence="1">
    <location>
        <position position="435"/>
    </location>
    <ligand>
        <name>Zn(2+)</name>
        <dbReference type="ChEBI" id="CHEBI:29105"/>
    </ligand>
</feature>